<keyword id="KW-0150">Chloroplast</keyword>
<keyword id="KW-0934">Plastid</keyword>
<keyword id="KW-0687">Ribonucleoprotein</keyword>
<keyword id="KW-0689">Ribosomal protein</keyword>
<keyword id="KW-0694">RNA-binding</keyword>
<keyword id="KW-0699">rRNA-binding</keyword>
<feature type="chain" id="PRO_0000241693" description="Large ribosomal subunit protein uL24c">
    <location>
        <begin position="1"/>
        <end position="116"/>
    </location>
</feature>
<feature type="sequence conflict" description="In Ref. 1; ABJ91321." evidence="2" ref="1">
    <original>I</original>
    <variation>V</variation>
    <location>
        <position position="115"/>
    </location>
</feature>
<accession>Q1XDI5</accession>
<accession>A0MMB3</accession>
<geneLocation type="chloroplast"/>
<dbReference type="EMBL" id="DQ995206">
    <property type="protein sequence ID" value="ABJ91321.1"/>
    <property type="molecule type" value="Genomic_DNA"/>
</dbReference>
<dbReference type="EMBL" id="AP006715">
    <property type="protein sequence ID" value="BAE92426.1"/>
    <property type="molecule type" value="Genomic_DNA"/>
</dbReference>
<dbReference type="RefSeq" id="YP_536983.1">
    <property type="nucleotide sequence ID" value="NC_007932.1"/>
</dbReference>
<dbReference type="SMR" id="Q1XDI5"/>
<dbReference type="GeneID" id="3978914"/>
<dbReference type="GO" id="GO:0009507">
    <property type="term" value="C:chloroplast"/>
    <property type="evidence" value="ECO:0007669"/>
    <property type="project" value="UniProtKB-SubCell"/>
</dbReference>
<dbReference type="GO" id="GO:1990904">
    <property type="term" value="C:ribonucleoprotein complex"/>
    <property type="evidence" value="ECO:0007669"/>
    <property type="project" value="UniProtKB-KW"/>
</dbReference>
<dbReference type="GO" id="GO:0005840">
    <property type="term" value="C:ribosome"/>
    <property type="evidence" value="ECO:0007669"/>
    <property type="project" value="UniProtKB-KW"/>
</dbReference>
<dbReference type="GO" id="GO:0019843">
    <property type="term" value="F:rRNA binding"/>
    <property type="evidence" value="ECO:0007669"/>
    <property type="project" value="UniProtKB-UniRule"/>
</dbReference>
<dbReference type="GO" id="GO:0003735">
    <property type="term" value="F:structural constituent of ribosome"/>
    <property type="evidence" value="ECO:0007669"/>
    <property type="project" value="InterPro"/>
</dbReference>
<dbReference type="GO" id="GO:0006412">
    <property type="term" value="P:translation"/>
    <property type="evidence" value="ECO:0007669"/>
    <property type="project" value="UniProtKB-UniRule"/>
</dbReference>
<dbReference type="CDD" id="cd06089">
    <property type="entry name" value="KOW_RPL26"/>
    <property type="match status" value="1"/>
</dbReference>
<dbReference type="Gene3D" id="2.30.30.30">
    <property type="match status" value="1"/>
</dbReference>
<dbReference type="HAMAP" id="MF_01326_B">
    <property type="entry name" value="Ribosomal_uL24_B"/>
    <property type="match status" value="1"/>
</dbReference>
<dbReference type="InterPro" id="IPR005824">
    <property type="entry name" value="KOW"/>
</dbReference>
<dbReference type="InterPro" id="IPR014722">
    <property type="entry name" value="Rib_uL2_dom2"/>
</dbReference>
<dbReference type="InterPro" id="IPR003256">
    <property type="entry name" value="Ribosomal_uL24"/>
</dbReference>
<dbReference type="InterPro" id="IPR041988">
    <property type="entry name" value="Ribosomal_uL24_KOW"/>
</dbReference>
<dbReference type="InterPro" id="IPR008991">
    <property type="entry name" value="Translation_prot_SH3-like_sf"/>
</dbReference>
<dbReference type="NCBIfam" id="TIGR01079">
    <property type="entry name" value="rplX_bact"/>
    <property type="match status" value="1"/>
</dbReference>
<dbReference type="PANTHER" id="PTHR12903">
    <property type="entry name" value="MITOCHONDRIAL RIBOSOMAL PROTEIN L24"/>
    <property type="match status" value="1"/>
</dbReference>
<dbReference type="Pfam" id="PF00467">
    <property type="entry name" value="KOW"/>
    <property type="match status" value="1"/>
</dbReference>
<dbReference type="Pfam" id="PF17136">
    <property type="entry name" value="ribosomal_L24"/>
    <property type="match status" value="1"/>
</dbReference>
<dbReference type="SMART" id="SM00739">
    <property type="entry name" value="KOW"/>
    <property type="match status" value="1"/>
</dbReference>
<dbReference type="SUPFAM" id="SSF50104">
    <property type="entry name" value="Translation proteins SH3-like domain"/>
    <property type="match status" value="1"/>
</dbReference>
<organism>
    <name type="scientific">Pyropia yezoensis</name>
    <name type="common">Susabi-nori</name>
    <name type="synonym">Porphyra yezoensis</name>
    <dbReference type="NCBI Taxonomy" id="2788"/>
    <lineage>
        <taxon>Eukaryota</taxon>
        <taxon>Rhodophyta</taxon>
        <taxon>Bangiophyceae</taxon>
        <taxon>Bangiales</taxon>
        <taxon>Bangiaceae</taxon>
        <taxon>Pyropia</taxon>
    </lineage>
</organism>
<reference key="1">
    <citation type="submission" date="2006-09" db="EMBL/GenBank/DDBJ databases">
        <title>Cloning and analysis of the Porphyra yezoensis gene for rpl24.</title>
        <authorList>
            <person name="Wang M.Q."/>
            <person name="Mao Y.X."/>
        </authorList>
    </citation>
    <scope>NUCLEOTIDE SEQUENCE [GENOMIC DNA]</scope>
    <source>
        <strain>Qingdao</strain>
    </source>
</reference>
<reference key="2">
    <citation type="submission" date="2003-11" db="EMBL/GenBank/DDBJ databases">
        <title>Whole genome sequence of Porphyra yezoensis chloroplast.</title>
        <authorList>
            <person name="Kunimoto M."/>
            <person name="Morishima K."/>
            <person name="Yoshikawa M."/>
            <person name="Fukuda S."/>
            <person name="Kobayashi T."/>
            <person name="Kobayashi M."/>
            <person name="Okazaki T."/>
            <person name="Ohara I."/>
            <person name="Nakayama I."/>
        </authorList>
    </citation>
    <scope>NUCLEOTIDE SEQUENCE [LARGE SCALE GENOMIC DNA]</scope>
    <source>
        <strain>U-51</strain>
    </source>
</reference>
<evidence type="ECO:0000250" key="1"/>
<evidence type="ECO:0000305" key="2"/>
<comment type="function">
    <text evidence="1">One of two assembly initiator proteins, it binds directly to the 5'-end of the 23S rRNA, where it nucleates assembly of the 50S subunit.</text>
</comment>
<comment type="subunit">
    <text evidence="1">Part of the 50S ribosomal subunit.</text>
</comment>
<comment type="subcellular location">
    <subcellularLocation>
        <location>Plastid</location>
        <location>Chloroplast</location>
    </subcellularLocation>
</comment>
<comment type="similarity">
    <text evidence="2">Belongs to the universal ribosomal protein uL24 family.</text>
</comment>
<protein>
    <recommendedName>
        <fullName evidence="2">Large ribosomal subunit protein uL24c</fullName>
    </recommendedName>
    <alternativeName>
        <fullName>50S ribosomal protein L24, chloroplastic</fullName>
    </alternativeName>
</protein>
<sequence length="116" mass="12883">MKGPSKTTKNNTKIKLKKGDLVQVISGSDKTKTGEIIAIIYKTNKVIVKGINLKVKHKKPQQEGETGEIIKFEAPIHTSNVMLFSEQNNIASRSSVIINDKGQKIRKLKKTGELIK</sequence>
<gene>
    <name type="primary">rpl24</name>
</gene>
<proteinExistence type="inferred from homology"/>
<name>RK24_PYRYE</name>